<protein>
    <recommendedName>
        <fullName evidence="1">N-acetyl-gamma-glutamyl-phosphate reductase</fullName>
        <shortName evidence="1">AGPR</shortName>
        <ecNumber evidence="1">1.2.1.38</ecNumber>
    </recommendedName>
    <alternativeName>
        <fullName evidence="1">N-acetyl-glutamate semialdehyde dehydrogenase</fullName>
        <shortName evidence="1">NAGSA dehydrogenase</shortName>
    </alternativeName>
</protein>
<name>ARGC_EHRCR</name>
<sequence length="346" mass="38871">MSYQVSVAVVGATGYVGVELVRLLLSHPMVKIKYLCATQSSGKLLSSNYFHISQDDISVNISSFDDIDLSKVDVVFLCLPHGTSSEVVRKIHDVVRIIDLSADFRIKDAEVYKQWYGSHCCPDLVRDFVYGLTEIYWEDIQRSRFIACPGCYPTSVLIPLFPLLRLCLIKSQGIIVDAKSGVSGAGRSVKQDKLFCEVYDVIKSYKISDHRHIPEIEQELCFAACREDINLQFVPNLIPVKRGMMSSIYLELEEGVSLTDVREALLLFYKDSSFVFIDEEKAMTTRSVVGTNYCYLGVFPGRVPNTIIIMSVIDNLLKGAAGQAVQNFNVMMSYDEKIALSNIPYF</sequence>
<gene>
    <name evidence="1" type="primary">argC</name>
    <name type="ordered locus">ECH_1017</name>
</gene>
<evidence type="ECO:0000255" key="1">
    <source>
        <dbReference type="HAMAP-Rule" id="MF_00150"/>
    </source>
</evidence>
<comment type="function">
    <text evidence="1">Catalyzes the NADPH-dependent reduction of N-acetyl-5-glutamyl phosphate to yield N-acetyl-L-glutamate 5-semialdehyde.</text>
</comment>
<comment type="catalytic activity">
    <reaction evidence="1">
        <text>N-acetyl-L-glutamate 5-semialdehyde + phosphate + NADP(+) = N-acetyl-L-glutamyl 5-phosphate + NADPH + H(+)</text>
        <dbReference type="Rhea" id="RHEA:21588"/>
        <dbReference type="ChEBI" id="CHEBI:15378"/>
        <dbReference type="ChEBI" id="CHEBI:29123"/>
        <dbReference type="ChEBI" id="CHEBI:43474"/>
        <dbReference type="ChEBI" id="CHEBI:57783"/>
        <dbReference type="ChEBI" id="CHEBI:57936"/>
        <dbReference type="ChEBI" id="CHEBI:58349"/>
        <dbReference type="EC" id="1.2.1.38"/>
    </reaction>
</comment>
<comment type="pathway">
    <text evidence="1">Amino-acid biosynthesis; L-arginine biosynthesis; N(2)-acetyl-L-ornithine from L-glutamate: step 3/4.</text>
</comment>
<comment type="subcellular location">
    <subcellularLocation>
        <location evidence="1">Cytoplasm</location>
    </subcellularLocation>
</comment>
<comment type="similarity">
    <text evidence="1">Belongs to the NAGSA dehydrogenase family. Type 1 subfamily.</text>
</comment>
<feature type="chain" id="PRO_1000010994" description="N-acetyl-gamma-glutamyl-phosphate reductase">
    <location>
        <begin position="1"/>
        <end position="346"/>
    </location>
</feature>
<feature type="active site" evidence="1">
    <location>
        <position position="151"/>
    </location>
</feature>
<organism>
    <name type="scientific">Ehrlichia chaffeensis (strain ATCC CRL-10679 / Arkansas)</name>
    <dbReference type="NCBI Taxonomy" id="205920"/>
    <lineage>
        <taxon>Bacteria</taxon>
        <taxon>Pseudomonadati</taxon>
        <taxon>Pseudomonadota</taxon>
        <taxon>Alphaproteobacteria</taxon>
        <taxon>Rickettsiales</taxon>
        <taxon>Anaplasmataceae</taxon>
        <taxon>Ehrlichia</taxon>
    </lineage>
</organism>
<keyword id="KW-0028">Amino-acid biosynthesis</keyword>
<keyword id="KW-0055">Arginine biosynthesis</keyword>
<keyword id="KW-0963">Cytoplasm</keyword>
<keyword id="KW-0521">NADP</keyword>
<keyword id="KW-0560">Oxidoreductase</keyword>
<keyword id="KW-1185">Reference proteome</keyword>
<proteinExistence type="inferred from homology"/>
<reference key="1">
    <citation type="journal article" date="2006" name="PLoS Genet.">
        <title>Comparative genomics of emerging human ehrlichiosis agents.</title>
        <authorList>
            <person name="Dunning Hotopp J.C."/>
            <person name="Lin M."/>
            <person name="Madupu R."/>
            <person name="Crabtree J."/>
            <person name="Angiuoli S.V."/>
            <person name="Eisen J.A."/>
            <person name="Seshadri R."/>
            <person name="Ren Q."/>
            <person name="Wu M."/>
            <person name="Utterback T.R."/>
            <person name="Smith S."/>
            <person name="Lewis M."/>
            <person name="Khouri H."/>
            <person name="Zhang C."/>
            <person name="Niu H."/>
            <person name="Lin Q."/>
            <person name="Ohashi N."/>
            <person name="Zhi N."/>
            <person name="Nelson W.C."/>
            <person name="Brinkac L.M."/>
            <person name="Dodson R.J."/>
            <person name="Rosovitz M.J."/>
            <person name="Sundaram J.P."/>
            <person name="Daugherty S.C."/>
            <person name="Davidsen T."/>
            <person name="Durkin A.S."/>
            <person name="Gwinn M.L."/>
            <person name="Haft D.H."/>
            <person name="Selengut J.D."/>
            <person name="Sullivan S.A."/>
            <person name="Zafar N."/>
            <person name="Zhou L."/>
            <person name="Benahmed F."/>
            <person name="Forberger H."/>
            <person name="Halpin R."/>
            <person name="Mulligan S."/>
            <person name="Robinson J."/>
            <person name="White O."/>
            <person name="Rikihisa Y."/>
            <person name="Tettelin H."/>
        </authorList>
    </citation>
    <scope>NUCLEOTIDE SEQUENCE [LARGE SCALE GENOMIC DNA]</scope>
    <source>
        <strain>ATCC CRL-10679 / Arkansas</strain>
    </source>
</reference>
<accession>Q2GFI0</accession>
<dbReference type="EC" id="1.2.1.38" evidence="1"/>
<dbReference type="EMBL" id="CP000236">
    <property type="protein sequence ID" value="ABD44839.1"/>
    <property type="molecule type" value="Genomic_DNA"/>
</dbReference>
<dbReference type="RefSeq" id="WP_006010333.1">
    <property type="nucleotide sequence ID" value="NC_007799.1"/>
</dbReference>
<dbReference type="SMR" id="Q2GFI0"/>
<dbReference type="STRING" id="205920.ECH_1017"/>
<dbReference type="KEGG" id="ech:ECH_1017"/>
<dbReference type="eggNOG" id="COG0002">
    <property type="taxonomic scope" value="Bacteria"/>
</dbReference>
<dbReference type="HOGENOM" id="CLU_006384_0_1_5"/>
<dbReference type="OrthoDB" id="9801289at2"/>
<dbReference type="UniPathway" id="UPA00068">
    <property type="reaction ID" value="UER00108"/>
</dbReference>
<dbReference type="Proteomes" id="UP000008320">
    <property type="component" value="Chromosome"/>
</dbReference>
<dbReference type="GO" id="GO:0005737">
    <property type="term" value="C:cytoplasm"/>
    <property type="evidence" value="ECO:0007669"/>
    <property type="project" value="UniProtKB-SubCell"/>
</dbReference>
<dbReference type="GO" id="GO:0003942">
    <property type="term" value="F:N-acetyl-gamma-glutamyl-phosphate reductase activity"/>
    <property type="evidence" value="ECO:0007669"/>
    <property type="project" value="UniProtKB-UniRule"/>
</dbReference>
<dbReference type="GO" id="GO:0051287">
    <property type="term" value="F:NAD binding"/>
    <property type="evidence" value="ECO:0007669"/>
    <property type="project" value="InterPro"/>
</dbReference>
<dbReference type="GO" id="GO:0070401">
    <property type="term" value="F:NADP+ binding"/>
    <property type="evidence" value="ECO:0007669"/>
    <property type="project" value="InterPro"/>
</dbReference>
<dbReference type="GO" id="GO:0006526">
    <property type="term" value="P:L-arginine biosynthetic process"/>
    <property type="evidence" value="ECO:0007669"/>
    <property type="project" value="UniProtKB-UniRule"/>
</dbReference>
<dbReference type="CDD" id="cd23934">
    <property type="entry name" value="AGPR_1_C"/>
    <property type="match status" value="1"/>
</dbReference>
<dbReference type="CDD" id="cd17895">
    <property type="entry name" value="AGPR_1_N"/>
    <property type="match status" value="1"/>
</dbReference>
<dbReference type="FunFam" id="3.30.360.10:FF:000014">
    <property type="entry name" value="N-acetyl-gamma-glutamyl-phosphate reductase"/>
    <property type="match status" value="1"/>
</dbReference>
<dbReference type="Gene3D" id="3.30.360.10">
    <property type="entry name" value="Dihydrodipicolinate Reductase, domain 2"/>
    <property type="match status" value="1"/>
</dbReference>
<dbReference type="Gene3D" id="3.40.50.720">
    <property type="entry name" value="NAD(P)-binding Rossmann-like Domain"/>
    <property type="match status" value="1"/>
</dbReference>
<dbReference type="HAMAP" id="MF_00150">
    <property type="entry name" value="ArgC_type1"/>
    <property type="match status" value="1"/>
</dbReference>
<dbReference type="InterPro" id="IPR023013">
    <property type="entry name" value="AGPR_AS"/>
</dbReference>
<dbReference type="InterPro" id="IPR000706">
    <property type="entry name" value="AGPR_type-1"/>
</dbReference>
<dbReference type="InterPro" id="IPR036291">
    <property type="entry name" value="NAD(P)-bd_dom_sf"/>
</dbReference>
<dbReference type="InterPro" id="IPR050085">
    <property type="entry name" value="NAGSA_dehydrogenase"/>
</dbReference>
<dbReference type="InterPro" id="IPR000534">
    <property type="entry name" value="Semialdehyde_DH_NAD-bd"/>
</dbReference>
<dbReference type="NCBIfam" id="TIGR01850">
    <property type="entry name" value="argC"/>
    <property type="match status" value="1"/>
</dbReference>
<dbReference type="PANTHER" id="PTHR32338:SF10">
    <property type="entry name" value="N-ACETYL-GAMMA-GLUTAMYL-PHOSPHATE REDUCTASE, CHLOROPLASTIC-RELATED"/>
    <property type="match status" value="1"/>
</dbReference>
<dbReference type="PANTHER" id="PTHR32338">
    <property type="entry name" value="N-ACETYL-GAMMA-GLUTAMYL-PHOSPHATE REDUCTASE, CHLOROPLASTIC-RELATED-RELATED"/>
    <property type="match status" value="1"/>
</dbReference>
<dbReference type="Pfam" id="PF01118">
    <property type="entry name" value="Semialdhyde_dh"/>
    <property type="match status" value="1"/>
</dbReference>
<dbReference type="Pfam" id="PF22698">
    <property type="entry name" value="Semialdhyde_dhC_1"/>
    <property type="match status" value="1"/>
</dbReference>
<dbReference type="SMART" id="SM00859">
    <property type="entry name" value="Semialdhyde_dh"/>
    <property type="match status" value="1"/>
</dbReference>
<dbReference type="SUPFAM" id="SSF55347">
    <property type="entry name" value="Glyceraldehyde-3-phosphate dehydrogenase-like, C-terminal domain"/>
    <property type="match status" value="1"/>
</dbReference>
<dbReference type="SUPFAM" id="SSF51735">
    <property type="entry name" value="NAD(P)-binding Rossmann-fold domains"/>
    <property type="match status" value="1"/>
</dbReference>
<dbReference type="PROSITE" id="PS01224">
    <property type="entry name" value="ARGC"/>
    <property type="match status" value="1"/>
</dbReference>